<gene>
    <name evidence="6 7" type="primary">TRBJ2-5</name>
</gene>
<feature type="chain" id="PRO_0000447311" description="T cell receptor beta joining 2-5">
    <location>
        <begin position="1" status="less than"/>
        <end position="15" status="greater than"/>
    </location>
</feature>
<feature type="non-terminal residue">
    <location>
        <position position="1"/>
    </location>
</feature>
<feature type="non-terminal residue">
    <location>
        <position position="15"/>
    </location>
</feature>
<protein>
    <recommendedName>
        <fullName evidence="6">T cell receptor beta joining 2-5</fullName>
    </recommendedName>
</protein>
<proteinExistence type="predicted"/>
<evidence type="ECO:0000303" key="1">
    <source>
    </source>
</evidence>
<evidence type="ECO:0000303" key="2">
    <source>
    </source>
</evidence>
<evidence type="ECO:0000303" key="3">
    <source>
    </source>
</evidence>
<evidence type="ECO:0000303" key="4">
    <source>
    </source>
</evidence>
<evidence type="ECO:0000303" key="5">
    <source>
    </source>
</evidence>
<evidence type="ECO:0000303" key="6">
    <source ref="2"/>
</evidence>
<evidence type="ECO:0000312" key="7">
    <source>
        <dbReference type="HGNC" id="HGNC:12173"/>
    </source>
</evidence>
<sequence length="15" mass="1722">QETQYFGPGTRLLVL</sequence>
<name>TJB25_HUMAN</name>
<dbReference type="EMBL" id="AC239618">
    <property type="status" value="NOT_ANNOTATED_CDS"/>
    <property type="molecule type" value="Genomic_DNA"/>
</dbReference>
<dbReference type="EMBL" id="AC245427">
    <property type="status" value="NOT_ANNOTATED_CDS"/>
    <property type="molecule type" value="Genomic_DNA"/>
</dbReference>
<dbReference type="IMGT_GENE-DB" id="TRBJ2-5"/>
<dbReference type="BioMuta" id="TRBJ2-5"/>
<dbReference type="UCSC" id="uc064itn.1">
    <property type="organism name" value="human"/>
</dbReference>
<dbReference type="AGR" id="HGNC:12173"/>
<dbReference type="GeneCards" id="TRBJ2-5"/>
<dbReference type="HGNC" id="HGNC:12173">
    <property type="gene designation" value="TRBJ2-5"/>
</dbReference>
<dbReference type="neXtProt" id="NX_A0A0A0MTA4"/>
<dbReference type="HOGENOM" id="CLU_221942_7_2_1"/>
<dbReference type="InParanoid" id="A0A0A0MTA4"/>
<dbReference type="PAN-GO" id="A0A0A0MTA4">
    <property type="GO annotations" value="0 GO annotations based on evolutionary models"/>
</dbReference>
<dbReference type="ChiTaRS" id="TRBJ2-5">
    <property type="organism name" value="human"/>
</dbReference>
<dbReference type="PRO" id="PR:A0A0A0MTA4"/>
<dbReference type="Proteomes" id="UP000005640">
    <property type="component" value="Unplaced"/>
</dbReference>
<dbReference type="GO" id="GO:0042101">
    <property type="term" value="C:T cell receptor complex"/>
    <property type="evidence" value="ECO:0007669"/>
    <property type="project" value="UniProtKB-KW"/>
</dbReference>
<dbReference type="GO" id="GO:0002250">
    <property type="term" value="P:adaptive immune response"/>
    <property type="evidence" value="ECO:0007669"/>
    <property type="project" value="UniProtKB-KW"/>
</dbReference>
<organism>
    <name type="scientific">Homo sapiens</name>
    <name type="common">Human</name>
    <dbReference type="NCBI Taxonomy" id="9606"/>
    <lineage>
        <taxon>Eukaryota</taxon>
        <taxon>Metazoa</taxon>
        <taxon>Chordata</taxon>
        <taxon>Craniata</taxon>
        <taxon>Vertebrata</taxon>
        <taxon>Euteleostomi</taxon>
        <taxon>Mammalia</taxon>
        <taxon>Eutheria</taxon>
        <taxon>Euarchontoglires</taxon>
        <taxon>Primates</taxon>
        <taxon>Haplorrhini</taxon>
        <taxon>Catarrhini</taxon>
        <taxon>Hominidae</taxon>
        <taxon>Homo</taxon>
    </lineage>
</organism>
<accession>A0A0A0MTA4</accession>
<keyword id="KW-1064">Adaptive immunity</keyword>
<keyword id="KW-1003">Cell membrane</keyword>
<keyword id="KW-0391">Immunity</keyword>
<keyword id="KW-0472">Membrane</keyword>
<keyword id="KW-0675">Receptor</keyword>
<keyword id="KW-1185">Reference proteome</keyword>
<keyword id="KW-1279">T cell receptor</keyword>
<comment type="function">
    <text evidence="1 3 4 5">J region of the variable domain of T cell receptor (TR) beta chain that participates in the antigen recognition (PubMed:24600447). Alpha-beta T cell receptors are antigen specific receptors which are essential to the immune response and are present on the cell surface of T lymphocytes. Recognize peptide-major histocompatibility (MH) (pMH) complexes that are displayed by antigen presenting cells (APC), a prerequisite for efficient T cell adaptive immunity against pathogens (PubMed:25493333). Binding of alpha-beta TR to pMH complex initiates TR-CD3 clustering on the cell surface and intracellular activation of LCK that phosphorylates the ITAM motifs of CD3G, CD3D, CD3E and CD247 enabling the recruitment of ZAP70. In turn ZAP70 phosphorylates LAT, which recruits numerous signaling molecules to form the LAT signalosome. The LAT signalosome propagates signal branching to three major signaling pathways, the calcium, the mitogen-activated protein kinase (MAPK) kinase and the nuclear factor NF-kappa-B (NF-kB) pathways, leading to the mobilization of transcription factors that are critical for gene expression and essential for T cell growth and differentiation (PubMed:23524462). The T cell repertoire is generated in the thymus, by V-(D)-J rearrangement. This repertoire is then shaped by intrathymic selection events to generate a peripheral T cell pool of self-MH restricted, non-autoaggressive T cells. Post-thymic interaction of alpha-beta TR with the pMH complexes shapes TR structural and functional avidity (PubMed:15040585).</text>
</comment>
<comment type="subunit">
    <text evidence="2">Alpha-beta TR is a heterodimer composed of an alpha and beta chain; disulfide-linked. The alpha-beta TR is associated with the transmembrane signaling CD3 coreceptor proteins to form the TR-CD3 (TcR or TCR). The assembly of alpha-beta TR heterodimers with CD3 occurs in the endoplasmic reticulum where a single alpha-beta TR heterodimer associates with one CD3D-CD3E heterodimer, one CD3G-CD3E heterodimer and one CD247 homodimer forming a stable octameric structure. CD3D-CD3E and CD3G-CD3E heterodimers preferentially associate with TR alpha and TR beta chains, respectively. The association of the CD247 homodimer is the last step of TcR assembly in the endoplasmic reticulum and is required for transport to the cell surface.</text>
</comment>
<comment type="subcellular location">
    <subcellularLocation>
        <location evidence="2">Cell membrane</location>
    </subcellularLocation>
</comment>
<reference key="1">
    <citation type="journal article" date="2003" name="Nature">
        <title>The DNA sequence of human chromosome 7.</title>
        <authorList>
            <person name="Hillier L.W."/>
            <person name="Fulton R.S."/>
            <person name="Fulton L.A."/>
            <person name="Graves T.A."/>
            <person name="Pepin K.H."/>
            <person name="Wagner-McPherson C."/>
            <person name="Layman D."/>
            <person name="Maas J."/>
            <person name="Jaeger S."/>
            <person name="Walker R."/>
            <person name="Wylie K."/>
            <person name="Sekhon M."/>
            <person name="Becker M.C."/>
            <person name="O'Laughlin M.D."/>
            <person name="Schaller M.E."/>
            <person name="Fewell G.A."/>
            <person name="Delehaunty K.D."/>
            <person name="Miner T.L."/>
            <person name="Nash W.E."/>
            <person name="Cordes M."/>
            <person name="Du H."/>
            <person name="Sun H."/>
            <person name="Edwards J."/>
            <person name="Bradshaw-Cordum H."/>
            <person name="Ali J."/>
            <person name="Andrews S."/>
            <person name="Isak A."/>
            <person name="Vanbrunt A."/>
            <person name="Nguyen C."/>
            <person name="Du F."/>
            <person name="Lamar B."/>
            <person name="Courtney L."/>
            <person name="Kalicki J."/>
            <person name="Ozersky P."/>
            <person name="Bielicki L."/>
            <person name="Scott K."/>
            <person name="Holmes A."/>
            <person name="Harkins R."/>
            <person name="Harris A."/>
            <person name="Strong C.M."/>
            <person name="Hou S."/>
            <person name="Tomlinson C."/>
            <person name="Dauphin-Kohlberg S."/>
            <person name="Kozlowicz-Reilly A."/>
            <person name="Leonard S."/>
            <person name="Rohlfing T."/>
            <person name="Rock S.M."/>
            <person name="Tin-Wollam A.-M."/>
            <person name="Abbott A."/>
            <person name="Minx P."/>
            <person name="Maupin R."/>
            <person name="Strowmatt C."/>
            <person name="Latreille P."/>
            <person name="Miller N."/>
            <person name="Johnson D."/>
            <person name="Murray J."/>
            <person name="Woessner J.P."/>
            <person name="Wendl M.C."/>
            <person name="Yang S.-P."/>
            <person name="Schultz B.R."/>
            <person name="Wallis J.W."/>
            <person name="Spieth J."/>
            <person name="Bieri T.A."/>
            <person name="Nelson J.O."/>
            <person name="Berkowicz N."/>
            <person name="Wohldmann P.E."/>
            <person name="Cook L.L."/>
            <person name="Hickenbotham M.T."/>
            <person name="Eldred J."/>
            <person name="Williams D."/>
            <person name="Bedell J.A."/>
            <person name="Mardis E.R."/>
            <person name="Clifton S.W."/>
            <person name="Chissoe S.L."/>
            <person name="Marra M.A."/>
            <person name="Raymond C."/>
            <person name="Haugen E."/>
            <person name="Gillett W."/>
            <person name="Zhou Y."/>
            <person name="James R."/>
            <person name="Phelps K."/>
            <person name="Iadanoto S."/>
            <person name="Bubb K."/>
            <person name="Simms E."/>
            <person name="Levy R."/>
            <person name="Clendenning J."/>
            <person name="Kaul R."/>
            <person name="Kent W.J."/>
            <person name="Furey T.S."/>
            <person name="Baertsch R.A."/>
            <person name="Brent M.R."/>
            <person name="Keibler E."/>
            <person name="Flicek P."/>
            <person name="Bork P."/>
            <person name="Suyama M."/>
            <person name="Bailey J.A."/>
            <person name="Portnoy M.E."/>
            <person name="Torrents D."/>
            <person name="Chinwalla A.T."/>
            <person name="Gish W.R."/>
            <person name="Eddy S.R."/>
            <person name="McPherson J.D."/>
            <person name="Olson M.V."/>
            <person name="Eichler E.E."/>
            <person name="Green E.D."/>
            <person name="Waterston R.H."/>
            <person name="Wilson R.K."/>
        </authorList>
    </citation>
    <scope>NUCLEOTIDE SEQUENCE [LARGE SCALE GENOMIC DNA] (IMGT ALLELE TRBJ2-5*01)</scope>
</reference>
<reference key="2">
    <citation type="book" date="2001" name="The T Cell Receptor FactsBook.">
        <title>The T Cell Receptor FactsBook.</title>
        <editorList>
            <person name="Lefranc M.P."/>
            <person name="Lefranc G."/>
        </editorList>
        <authorList>
            <person name="Lefranc M.P."/>
            <person name="Lefranc G."/>
        </authorList>
    </citation>
    <scope>NOMENCLATURE</scope>
</reference>
<reference key="3">
    <citation type="journal article" date="2004" name="Nat. Rev. Immunol.">
        <title>The many important facets of T-cell repertoire diversity.</title>
        <authorList>
            <person name="Nikolich-Zugich J."/>
            <person name="Slifka M.K."/>
            <person name="Messaoudi I."/>
        </authorList>
    </citation>
    <scope>REVIEW ON T CELL REPERTOIRE DIVERSITY</scope>
</reference>
<reference key="4">
    <citation type="journal article" date="2010" name="Cold Spring Harb. Perspect. Biol.">
        <title>Structural biology of the T-cell receptor: insights into receptor assembly, ligand recognition, and initiation of signaling.</title>
        <authorList>
            <person name="Wucherpfennig K.W."/>
            <person name="Gagnon E."/>
            <person name="Call M.J."/>
            <person name="Huseby E.S."/>
            <person name="Call M.E."/>
        </authorList>
    </citation>
    <scope>REVIEW ON T CELL RECEPTOR-CD3 COMPLEX ASSEMBLY</scope>
    <scope>SUBCELLULAR LOCATION</scope>
</reference>
<reference key="5">
    <citation type="journal article" date="2013" name="Nat. Rev. Immunol.">
        <title>T cell receptor signalling networks: branched, diversified and bounded.</title>
        <authorList>
            <person name="Brownlie R.J."/>
            <person name="Zamoyska R."/>
        </authorList>
    </citation>
    <scope>REVIEW ON T CELL RECEPTOR SIGNALING</scope>
</reference>
<reference key="6">
    <citation type="journal article" date="2014" name="Front. Immunol.">
        <title>Immunoglobulin and T Cell Receptor Genes: IMGT((R)) and the Birth and Rise of Immunoinformatics.</title>
        <authorList>
            <person name="Lefranc M.P."/>
        </authorList>
    </citation>
    <scope>NOMENCLATURE</scope>
</reference>
<reference key="7">
    <citation type="journal article" date="2015" name="Annu. Rev. Immunol.">
        <title>T cell antigen receptor recognition of antigen-presenting molecules.</title>
        <authorList>
            <person name="Rossjohn J."/>
            <person name="Gras S."/>
            <person name="Miles J.J."/>
            <person name="Turner S.J."/>
            <person name="Godfrey D.I."/>
            <person name="McCluskey J."/>
        </authorList>
    </citation>
    <scope>REVIEW ON FUNCTION</scope>
</reference>